<dbReference type="EC" id="2.7.11.1"/>
<dbReference type="EMBL" id="AL023094">
    <property type="protein sequence ID" value="CAA18829.1"/>
    <property type="status" value="ALT_SEQ"/>
    <property type="molecule type" value="Genomic_DNA"/>
</dbReference>
<dbReference type="EMBL" id="AL161585">
    <property type="protein sequence ID" value="CAB80167.1"/>
    <property type="status" value="ALT_SEQ"/>
    <property type="molecule type" value="Genomic_DNA"/>
</dbReference>
<dbReference type="EMBL" id="CP002687">
    <property type="protein sequence ID" value="AEE86386.1"/>
    <property type="molecule type" value="Genomic_DNA"/>
</dbReference>
<dbReference type="EMBL" id="BT011239">
    <property type="protein sequence ID" value="AAR92275.1"/>
    <property type="molecule type" value="mRNA"/>
</dbReference>
<dbReference type="EMBL" id="BT012544">
    <property type="protein sequence ID" value="AAS99688.1"/>
    <property type="molecule type" value="mRNA"/>
</dbReference>
<dbReference type="PIR" id="T05270">
    <property type="entry name" value="T05270"/>
</dbReference>
<dbReference type="RefSeq" id="NP_195176.2">
    <property type="nucleotide sequence ID" value="NM_119615.5"/>
</dbReference>
<dbReference type="SMR" id="Q6NKZ9"/>
<dbReference type="FunCoup" id="Q6NKZ9">
    <property type="interactions" value="197"/>
</dbReference>
<dbReference type="STRING" id="3702.Q6NKZ9"/>
<dbReference type="iPTMnet" id="Q6NKZ9"/>
<dbReference type="PaxDb" id="3702-AT4G34500.1"/>
<dbReference type="ProteomicsDB" id="243126"/>
<dbReference type="EnsemblPlants" id="AT4G34500.1">
    <property type="protein sequence ID" value="AT4G34500.1"/>
    <property type="gene ID" value="AT4G34500"/>
</dbReference>
<dbReference type="GeneID" id="829601"/>
<dbReference type="Gramene" id="AT4G34500.1">
    <property type="protein sequence ID" value="AT4G34500.1"/>
    <property type="gene ID" value="AT4G34500"/>
</dbReference>
<dbReference type="KEGG" id="ath:AT4G34500"/>
<dbReference type="Araport" id="AT4G34500"/>
<dbReference type="TAIR" id="AT4G34500"/>
<dbReference type="eggNOG" id="KOG1187">
    <property type="taxonomic scope" value="Eukaryota"/>
</dbReference>
<dbReference type="HOGENOM" id="CLU_000288_4_1_1"/>
<dbReference type="InParanoid" id="Q6NKZ9"/>
<dbReference type="OMA" id="CADSAQR"/>
<dbReference type="OrthoDB" id="4062651at2759"/>
<dbReference type="PhylomeDB" id="Q6NKZ9"/>
<dbReference type="PRO" id="PR:Q6NKZ9"/>
<dbReference type="Proteomes" id="UP000006548">
    <property type="component" value="Chromosome 4"/>
</dbReference>
<dbReference type="ExpressionAtlas" id="Q6NKZ9">
    <property type="expression patterns" value="baseline and differential"/>
</dbReference>
<dbReference type="GO" id="GO:0005886">
    <property type="term" value="C:plasma membrane"/>
    <property type="evidence" value="ECO:0007669"/>
    <property type="project" value="UniProtKB-SubCell"/>
</dbReference>
<dbReference type="GO" id="GO:0005524">
    <property type="term" value="F:ATP binding"/>
    <property type="evidence" value="ECO:0007669"/>
    <property type="project" value="UniProtKB-KW"/>
</dbReference>
<dbReference type="GO" id="GO:0106310">
    <property type="term" value="F:protein serine kinase activity"/>
    <property type="evidence" value="ECO:0007669"/>
    <property type="project" value="RHEA"/>
</dbReference>
<dbReference type="GO" id="GO:0004674">
    <property type="term" value="F:protein serine/threonine kinase activity"/>
    <property type="evidence" value="ECO:0007669"/>
    <property type="project" value="UniProtKB-KW"/>
</dbReference>
<dbReference type="CDD" id="cd14066">
    <property type="entry name" value="STKc_IRAK"/>
    <property type="match status" value="1"/>
</dbReference>
<dbReference type="FunFam" id="3.30.200.20:FF:000125">
    <property type="entry name" value="Protein STRUBBELIG-RECEPTOR FAMILY 8"/>
    <property type="match status" value="1"/>
</dbReference>
<dbReference type="FunFam" id="1.10.510.10:FF:000035">
    <property type="entry name" value="Putative receptor-like serine/threonine-protein kinase"/>
    <property type="match status" value="1"/>
</dbReference>
<dbReference type="Gene3D" id="3.30.200.20">
    <property type="entry name" value="Phosphorylase Kinase, domain 1"/>
    <property type="match status" value="1"/>
</dbReference>
<dbReference type="Gene3D" id="1.10.510.10">
    <property type="entry name" value="Transferase(Phosphotransferase) domain 1"/>
    <property type="match status" value="1"/>
</dbReference>
<dbReference type="InterPro" id="IPR011009">
    <property type="entry name" value="Kinase-like_dom_sf"/>
</dbReference>
<dbReference type="InterPro" id="IPR000719">
    <property type="entry name" value="Prot_kinase_dom"/>
</dbReference>
<dbReference type="InterPro" id="IPR017441">
    <property type="entry name" value="Protein_kinase_ATP_BS"/>
</dbReference>
<dbReference type="InterPro" id="IPR052232">
    <property type="entry name" value="RLK_Ser/Thr-Kinase"/>
</dbReference>
<dbReference type="InterPro" id="IPR001245">
    <property type="entry name" value="Ser-Thr/Tyr_kinase_cat_dom"/>
</dbReference>
<dbReference type="InterPro" id="IPR008271">
    <property type="entry name" value="Ser/Thr_kinase_AS"/>
</dbReference>
<dbReference type="PANTHER" id="PTHR47984">
    <property type="entry name" value="OS01G0323000 PROTEIN"/>
    <property type="match status" value="1"/>
</dbReference>
<dbReference type="PANTHER" id="PTHR47984:SF31">
    <property type="entry name" value="OS03G0227900 PROTEIN"/>
    <property type="match status" value="1"/>
</dbReference>
<dbReference type="Pfam" id="PF07714">
    <property type="entry name" value="PK_Tyr_Ser-Thr"/>
    <property type="match status" value="1"/>
</dbReference>
<dbReference type="SMART" id="SM00220">
    <property type="entry name" value="S_TKc"/>
    <property type="match status" value="1"/>
</dbReference>
<dbReference type="SUPFAM" id="SSF56112">
    <property type="entry name" value="Protein kinase-like (PK-like)"/>
    <property type="match status" value="1"/>
</dbReference>
<dbReference type="PROSITE" id="PS00107">
    <property type="entry name" value="PROTEIN_KINASE_ATP"/>
    <property type="match status" value="1"/>
</dbReference>
<dbReference type="PROSITE" id="PS50011">
    <property type="entry name" value="PROTEIN_KINASE_DOM"/>
    <property type="match status" value="1"/>
</dbReference>
<dbReference type="PROSITE" id="PS00108">
    <property type="entry name" value="PROTEIN_KINASE_ST"/>
    <property type="match status" value="1"/>
</dbReference>
<organism>
    <name type="scientific">Arabidopsis thaliana</name>
    <name type="common">Mouse-ear cress</name>
    <dbReference type="NCBI Taxonomy" id="3702"/>
    <lineage>
        <taxon>Eukaryota</taxon>
        <taxon>Viridiplantae</taxon>
        <taxon>Streptophyta</taxon>
        <taxon>Embryophyta</taxon>
        <taxon>Tracheophyta</taxon>
        <taxon>Spermatophyta</taxon>
        <taxon>Magnoliopsida</taxon>
        <taxon>eudicotyledons</taxon>
        <taxon>Gunneridae</taxon>
        <taxon>Pentapetalae</taxon>
        <taxon>rosids</taxon>
        <taxon>malvids</taxon>
        <taxon>Brassicales</taxon>
        <taxon>Brassicaceae</taxon>
        <taxon>Camelineae</taxon>
        <taxon>Arabidopsis</taxon>
    </lineage>
</organism>
<feature type="chain" id="PRO_0000401346" description="Probable receptor-like serine/threonine-protein kinase At4g34500">
    <location>
        <begin position="1"/>
        <end position="437"/>
    </location>
</feature>
<feature type="transmembrane region" description="Helical" evidence="3">
    <location>
        <begin position="25"/>
        <end position="45"/>
    </location>
</feature>
<feature type="domain" description="Protein kinase" evidence="4">
    <location>
        <begin position="145"/>
        <end position="426"/>
    </location>
</feature>
<feature type="active site" description="Proton acceptor" evidence="4 5">
    <location>
        <position position="273"/>
    </location>
</feature>
<feature type="binding site" evidence="4">
    <location>
        <begin position="151"/>
        <end position="159"/>
    </location>
    <ligand>
        <name>ATP</name>
        <dbReference type="ChEBI" id="CHEBI:30616"/>
    </ligand>
</feature>
<feature type="binding site" evidence="4">
    <location>
        <position position="173"/>
    </location>
    <ligand>
        <name>ATP</name>
        <dbReference type="ChEBI" id="CHEBI:30616"/>
    </ligand>
</feature>
<feature type="modified residue" description="Phosphotyrosine" evidence="2">
    <location>
        <position position="220"/>
    </location>
</feature>
<feature type="modified residue" description="Phosphoserine" evidence="2">
    <location>
        <position position="277"/>
    </location>
</feature>
<feature type="modified residue" description="Phosphothreonine" evidence="2">
    <location>
        <position position="307"/>
    </location>
</feature>
<feature type="modified residue" description="Phosphothreonine" evidence="2">
    <location>
        <position position="312"/>
    </location>
</feature>
<feature type="modified residue" description="Phosphotyrosine" evidence="2">
    <location>
        <position position="320"/>
    </location>
</feature>
<keyword id="KW-0067">ATP-binding</keyword>
<keyword id="KW-1003">Cell membrane</keyword>
<keyword id="KW-0418">Kinase</keyword>
<keyword id="KW-0472">Membrane</keyword>
<keyword id="KW-0547">Nucleotide-binding</keyword>
<keyword id="KW-0597">Phosphoprotein</keyword>
<keyword id="KW-1185">Reference proteome</keyword>
<keyword id="KW-0723">Serine/threonine-protein kinase</keyword>
<keyword id="KW-0808">Transferase</keyword>
<keyword id="KW-0812">Transmembrane</keyword>
<keyword id="KW-1133">Transmembrane helix</keyword>
<sequence length="437" mass="47985">MSDSGGGSHKSSTTKPSVFGLNLYLVIAICSVFILLISLLIFLFVCLNRVSRARRMRVKHSSGSIPLVSKEISEIKTVGKFINSDDSKGKIGNEVVVVVSATSKEATSGFDTLSVASSGDVGTSEAMGWGKWYSLKDLEIATRGFSDDNMIGEGGYGVVYRADFSDGSVAAVKNLLNNKGQAEKEFKVEVEAIGKVRHKNLVGLMGYCADSAQSQRMLVYEYIDNGNLEQWLHGDVGPVSPLTWDIRMKIAIGTAKGLAYLHEGLEPKVVHRDVKSSNILLDKKWNAKVSDFGLAKLLGSETSYVTTRVMGTFGYVSPEYASTGMLNECSDVYSFGVLLMEIITGRSPVDYSRPPGEMNLVDWFKGMVASRRGEEVIDPKIKTSPPPRALKRALLVCLRCIDLDSSKRPKMGQIIHMLEAEDFPFRPEHRSNQERSK</sequence>
<comment type="catalytic activity">
    <reaction>
        <text>L-seryl-[protein] + ATP = O-phospho-L-seryl-[protein] + ADP + H(+)</text>
        <dbReference type="Rhea" id="RHEA:17989"/>
        <dbReference type="Rhea" id="RHEA-COMP:9863"/>
        <dbReference type="Rhea" id="RHEA-COMP:11604"/>
        <dbReference type="ChEBI" id="CHEBI:15378"/>
        <dbReference type="ChEBI" id="CHEBI:29999"/>
        <dbReference type="ChEBI" id="CHEBI:30616"/>
        <dbReference type="ChEBI" id="CHEBI:83421"/>
        <dbReference type="ChEBI" id="CHEBI:456216"/>
        <dbReference type="EC" id="2.7.11.1"/>
    </reaction>
</comment>
<comment type="catalytic activity">
    <reaction>
        <text>L-threonyl-[protein] + ATP = O-phospho-L-threonyl-[protein] + ADP + H(+)</text>
        <dbReference type="Rhea" id="RHEA:46608"/>
        <dbReference type="Rhea" id="RHEA-COMP:11060"/>
        <dbReference type="Rhea" id="RHEA-COMP:11605"/>
        <dbReference type="ChEBI" id="CHEBI:15378"/>
        <dbReference type="ChEBI" id="CHEBI:30013"/>
        <dbReference type="ChEBI" id="CHEBI:30616"/>
        <dbReference type="ChEBI" id="CHEBI:61977"/>
        <dbReference type="ChEBI" id="CHEBI:456216"/>
        <dbReference type="EC" id="2.7.11.1"/>
    </reaction>
</comment>
<comment type="subcellular location">
    <subcellularLocation>
        <location evidence="1">Cell membrane</location>
        <topology evidence="1">Single-pass membrane protein</topology>
    </subcellularLocation>
</comment>
<comment type="similarity">
    <text evidence="4">Belongs to the protein kinase superfamily. Ser/Thr protein kinase family.</text>
</comment>
<comment type="sequence caution" evidence="6">
    <conflict type="erroneous gene model prediction">
        <sequence resource="EMBL-CDS" id="CAA18829"/>
    </conflict>
</comment>
<comment type="sequence caution" evidence="6">
    <conflict type="erroneous gene model prediction">
        <sequence resource="EMBL-CDS" id="CAB80167"/>
    </conflict>
</comment>
<accession>Q6NKZ9</accession>
<accession>O65676</accession>
<gene>
    <name type="ordered locus">At4g34500</name>
    <name type="ORF">T4L20.80</name>
</gene>
<name>Y4345_ARATH</name>
<protein>
    <recommendedName>
        <fullName>Probable receptor-like serine/threonine-protein kinase At4g34500</fullName>
        <ecNumber>2.7.11.1</ecNumber>
    </recommendedName>
</protein>
<proteinExistence type="evidence at transcript level"/>
<reference key="1">
    <citation type="journal article" date="1999" name="Nature">
        <title>Sequence and analysis of chromosome 4 of the plant Arabidopsis thaliana.</title>
        <authorList>
            <person name="Mayer K.F.X."/>
            <person name="Schueller C."/>
            <person name="Wambutt R."/>
            <person name="Murphy G."/>
            <person name="Volckaert G."/>
            <person name="Pohl T."/>
            <person name="Duesterhoeft A."/>
            <person name="Stiekema W."/>
            <person name="Entian K.-D."/>
            <person name="Terryn N."/>
            <person name="Harris B."/>
            <person name="Ansorge W."/>
            <person name="Brandt P."/>
            <person name="Grivell L.A."/>
            <person name="Rieger M."/>
            <person name="Weichselgartner M."/>
            <person name="de Simone V."/>
            <person name="Obermaier B."/>
            <person name="Mache R."/>
            <person name="Mueller M."/>
            <person name="Kreis M."/>
            <person name="Delseny M."/>
            <person name="Puigdomenech P."/>
            <person name="Watson M."/>
            <person name="Schmidtheini T."/>
            <person name="Reichert B."/>
            <person name="Portetelle D."/>
            <person name="Perez-Alonso M."/>
            <person name="Boutry M."/>
            <person name="Bancroft I."/>
            <person name="Vos P."/>
            <person name="Hoheisel J."/>
            <person name="Zimmermann W."/>
            <person name="Wedler H."/>
            <person name="Ridley P."/>
            <person name="Langham S.-A."/>
            <person name="McCullagh B."/>
            <person name="Bilham L."/>
            <person name="Robben J."/>
            <person name="van der Schueren J."/>
            <person name="Grymonprez B."/>
            <person name="Chuang Y.-J."/>
            <person name="Vandenbussche F."/>
            <person name="Braeken M."/>
            <person name="Weltjens I."/>
            <person name="Voet M."/>
            <person name="Bastiaens I."/>
            <person name="Aert R."/>
            <person name="Defoor E."/>
            <person name="Weitzenegger T."/>
            <person name="Bothe G."/>
            <person name="Ramsperger U."/>
            <person name="Hilbert H."/>
            <person name="Braun M."/>
            <person name="Holzer E."/>
            <person name="Brandt A."/>
            <person name="Peters S."/>
            <person name="van Staveren M."/>
            <person name="Dirkse W."/>
            <person name="Mooijman P."/>
            <person name="Klein Lankhorst R."/>
            <person name="Rose M."/>
            <person name="Hauf J."/>
            <person name="Koetter P."/>
            <person name="Berneiser S."/>
            <person name="Hempel S."/>
            <person name="Feldpausch M."/>
            <person name="Lamberth S."/>
            <person name="Van den Daele H."/>
            <person name="De Keyser A."/>
            <person name="Buysshaert C."/>
            <person name="Gielen J."/>
            <person name="Villarroel R."/>
            <person name="De Clercq R."/>
            <person name="van Montagu M."/>
            <person name="Rogers J."/>
            <person name="Cronin A."/>
            <person name="Quail M.A."/>
            <person name="Bray-Allen S."/>
            <person name="Clark L."/>
            <person name="Doggett J."/>
            <person name="Hall S."/>
            <person name="Kay M."/>
            <person name="Lennard N."/>
            <person name="McLay K."/>
            <person name="Mayes R."/>
            <person name="Pettett A."/>
            <person name="Rajandream M.A."/>
            <person name="Lyne M."/>
            <person name="Benes V."/>
            <person name="Rechmann S."/>
            <person name="Borkova D."/>
            <person name="Bloecker H."/>
            <person name="Scharfe M."/>
            <person name="Grimm M."/>
            <person name="Loehnert T.-H."/>
            <person name="Dose S."/>
            <person name="de Haan M."/>
            <person name="Maarse A.C."/>
            <person name="Schaefer M."/>
            <person name="Mueller-Auer S."/>
            <person name="Gabel C."/>
            <person name="Fuchs M."/>
            <person name="Fartmann B."/>
            <person name="Granderath K."/>
            <person name="Dauner D."/>
            <person name="Herzl A."/>
            <person name="Neumann S."/>
            <person name="Argiriou A."/>
            <person name="Vitale D."/>
            <person name="Liguori R."/>
            <person name="Piravandi E."/>
            <person name="Massenet O."/>
            <person name="Quigley F."/>
            <person name="Clabauld G."/>
            <person name="Muendlein A."/>
            <person name="Felber R."/>
            <person name="Schnabl S."/>
            <person name="Hiller R."/>
            <person name="Schmidt W."/>
            <person name="Lecharny A."/>
            <person name="Aubourg S."/>
            <person name="Chefdor F."/>
            <person name="Cooke R."/>
            <person name="Berger C."/>
            <person name="Monfort A."/>
            <person name="Casacuberta E."/>
            <person name="Gibbons T."/>
            <person name="Weber N."/>
            <person name="Vandenbol M."/>
            <person name="Bargues M."/>
            <person name="Terol J."/>
            <person name="Torres A."/>
            <person name="Perez-Perez A."/>
            <person name="Purnelle B."/>
            <person name="Bent E."/>
            <person name="Johnson S."/>
            <person name="Tacon D."/>
            <person name="Jesse T."/>
            <person name="Heijnen L."/>
            <person name="Schwarz S."/>
            <person name="Scholler P."/>
            <person name="Heber S."/>
            <person name="Francs P."/>
            <person name="Bielke C."/>
            <person name="Frishman D."/>
            <person name="Haase D."/>
            <person name="Lemcke K."/>
            <person name="Mewes H.-W."/>
            <person name="Stocker S."/>
            <person name="Zaccaria P."/>
            <person name="Bevan M."/>
            <person name="Wilson R.K."/>
            <person name="de la Bastide M."/>
            <person name="Habermann K."/>
            <person name="Parnell L."/>
            <person name="Dedhia N."/>
            <person name="Gnoj L."/>
            <person name="Schutz K."/>
            <person name="Huang E."/>
            <person name="Spiegel L."/>
            <person name="Sekhon M."/>
            <person name="Murray J."/>
            <person name="Sheet P."/>
            <person name="Cordes M."/>
            <person name="Abu-Threideh J."/>
            <person name="Stoneking T."/>
            <person name="Kalicki J."/>
            <person name="Graves T."/>
            <person name="Harmon G."/>
            <person name="Edwards J."/>
            <person name="Latreille P."/>
            <person name="Courtney L."/>
            <person name="Cloud J."/>
            <person name="Abbott A."/>
            <person name="Scott K."/>
            <person name="Johnson D."/>
            <person name="Minx P."/>
            <person name="Bentley D."/>
            <person name="Fulton B."/>
            <person name="Miller N."/>
            <person name="Greco T."/>
            <person name="Kemp K."/>
            <person name="Kramer J."/>
            <person name="Fulton L."/>
            <person name="Mardis E."/>
            <person name="Dante M."/>
            <person name="Pepin K."/>
            <person name="Hillier L.W."/>
            <person name="Nelson J."/>
            <person name="Spieth J."/>
            <person name="Ryan E."/>
            <person name="Andrews S."/>
            <person name="Geisel C."/>
            <person name="Layman D."/>
            <person name="Du H."/>
            <person name="Ali J."/>
            <person name="Berghoff A."/>
            <person name="Jones K."/>
            <person name="Drone K."/>
            <person name="Cotton M."/>
            <person name="Joshu C."/>
            <person name="Antonoiu B."/>
            <person name="Zidanic M."/>
            <person name="Strong C."/>
            <person name="Sun H."/>
            <person name="Lamar B."/>
            <person name="Yordan C."/>
            <person name="Ma P."/>
            <person name="Zhong J."/>
            <person name="Preston R."/>
            <person name="Vil D."/>
            <person name="Shekher M."/>
            <person name="Matero A."/>
            <person name="Shah R."/>
            <person name="Swaby I.K."/>
            <person name="O'Shaughnessy A."/>
            <person name="Rodriguez M."/>
            <person name="Hoffman J."/>
            <person name="Till S."/>
            <person name="Granat S."/>
            <person name="Shohdy N."/>
            <person name="Hasegawa A."/>
            <person name="Hameed A."/>
            <person name="Lodhi M."/>
            <person name="Johnson A."/>
            <person name="Chen E."/>
            <person name="Marra M.A."/>
            <person name="Martienssen R."/>
            <person name="McCombie W.R."/>
        </authorList>
    </citation>
    <scope>NUCLEOTIDE SEQUENCE [LARGE SCALE GENOMIC DNA]</scope>
    <source>
        <strain>cv. Columbia</strain>
    </source>
</reference>
<reference key="2">
    <citation type="journal article" date="2017" name="Plant J.">
        <title>Araport11: a complete reannotation of the Arabidopsis thaliana reference genome.</title>
        <authorList>
            <person name="Cheng C.Y."/>
            <person name="Krishnakumar V."/>
            <person name="Chan A.P."/>
            <person name="Thibaud-Nissen F."/>
            <person name="Schobel S."/>
            <person name="Town C.D."/>
        </authorList>
    </citation>
    <scope>GENOME REANNOTATION</scope>
    <source>
        <strain>cv. Columbia</strain>
    </source>
</reference>
<reference key="3">
    <citation type="submission" date="2004-04" db="EMBL/GenBank/DDBJ databases">
        <title>Arabidopsis ORF clones.</title>
        <authorList>
            <person name="Chen H."/>
            <person name="Kim C.J."/>
            <person name="Cheuk R.F."/>
            <person name="Shinn P."/>
            <person name="Ecker J.R."/>
        </authorList>
    </citation>
    <scope>NUCLEOTIDE SEQUENCE [LARGE SCALE MRNA]</scope>
    <source>
        <strain>cv. Columbia</strain>
    </source>
</reference>
<evidence type="ECO:0000250" key="1"/>
<evidence type="ECO:0000250" key="2">
    <source>
        <dbReference type="UniProtKB" id="O48814"/>
    </source>
</evidence>
<evidence type="ECO:0000255" key="3"/>
<evidence type="ECO:0000255" key="4">
    <source>
        <dbReference type="PROSITE-ProRule" id="PRU00159"/>
    </source>
</evidence>
<evidence type="ECO:0000255" key="5">
    <source>
        <dbReference type="PROSITE-ProRule" id="PRU10027"/>
    </source>
</evidence>
<evidence type="ECO:0000305" key="6"/>